<evidence type="ECO:0000250" key="1"/>
<evidence type="ECO:0000255" key="2">
    <source>
        <dbReference type="HAMAP-Rule" id="MF_00610"/>
    </source>
</evidence>
<name>CYF_SACHY</name>
<protein>
    <recommendedName>
        <fullName evidence="2">Cytochrome f</fullName>
    </recommendedName>
</protein>
<comment type="function">
    <text evidence="2">Component of the cytochrome b6-f complex, which mediates electron transfer between photosystem II (PSII) and photosystem I (PSI), cyclic electron flow around PSI, and state transitions.</text>
</comment>
<comment type="cofactor">
    <cofactor evidence="2">
        <name>heme</name>
        <dbReference type="ChEBI" id="CHEBI:30413"/>
    </cofactor>
    <text evidence="2">Binds 1 heme group covalently.</text>
</comment>
<comment type="subunit">
    <text evidence="1">The 4 large subunits of the cytochrome b6-f complex are cytochrome b6, subunit IV (17 kDa polypeptide, petD), cytochrome f and the Rieske protein, while the 4 small subunits are PetG, PetL, PetM and PetN. The complex functions as a dimer (By similarity).</text>
</comment>
<comment type="subcellular location">
    <subcellularLocation>
        <location evidence="2">Plastid</location>
        <location evidence="2">Chloroplast thylakoid membrane</location>
        <topology evidence="2">Single-pass membrane protein</topology>
    </subcellularLocation>
</comment>
<comment type="similarity">
    <text evidence="2">Belongs to the cytochrome f family.</text>
</comment>
<sequence length="320" mass="35477">MENRKTFSWLKEQMIRSISVSIMIYVITRTSISNAYPIFAQQGYENPREATGRIVCANCHLANKPVDIEVPQAVLPDTVFEAVLRIPYDMQLKQVLANGKKGGLNVGAVLILPEGFELAPPDRISPELKEKIGNLSFQSYRPNKKNILVIGPVPGKKYSEIVFPILSPDPATKKDVHFLKYPIYVGGNRGRGQIYPDGTKSNNTVYNATSTGIVKKILRKEKGGYEISIVDASDGRQVIDIIPPGPELLVSEGESIKLDQPLTSNPNVGGFGQGDAEIVLQDPLRVQGLLFFFASVILAQVFLVLKKKQFEKVQLYEMNF</sequence>
<organism>
    <name type="scientific">Saccharum hybrid</name>
    <name type="common">Sugarcane</name>
    <dbReference type="NCBI Taxonomy" id="15819"/>
    <lineage>
        <taxon>Eukaryota</taxon>
        <taxon>Viridiplantae</taxon>
        <taxon>Streptophyta</taxon>
        <taxon>Embryophyta</taxon>
        <taxon>Tracheophyta</taxon>
        <taxon>Spermatophyta</taxon>
        <taxon>Magnoliopsida</taxon>
        <taxon>Liliopsida</taxon>
        <taxon>Poales</taxon>
        <taxon>Poaceae</taxon>
        <taxon>PACMAD clade</taxon>
        <taxon>Panicoideae</taxon>
        <taxon>Andropogonodae</taxon>
        <taxon>Andropogoneae</taxon>
        <taxon>Saccharinae</taxon>
        <taxon>Saccharum</taxon>
    </lineage>
</organism>
<keyword id="KW-0150">Chloroplast</keyword>
<keyword id="KW-0249">Electron transport</keyword>
<keyword id="KW-0349">Heme</keyword>
<keyword id="KW-0408">Iron</keyword>
<keyword id="KW-0472">Membrane</keyword>
<keyword id="KW-0479">Metal-binding</keyword>
<keyword id="KW-0602">Photosynthesis</keyword>
<keyword id="KW-0934">Plastid</keyword>
<keyword id="KW-0732">Signal</keyword>
<keyword id="KW-0793">Thylakoid</keyword>
<keyword id="KW-0812">Transmembrane</keyword>
<keyword id="KW-1133">Transmembrane helix</keyword>
<keyword id="KW-0813">Transport</keyword>
<geneLocation type="chloroplast"/>
<feature type="signal peptide" evidence="2">
    <location>
        <begin position="1"/>
        <end position="35"/>
    </location>
</feature>
<feature type="chain" id="PRO_0000042055" description="Cytochrome f">
    <location>
        <begin position="36"/>
        <end position="320"/>
    </location>
</feature>
<feature type="transmembrane region" description="Helical" evidence="2">
    <location>
        <begin position="286"/>
        <end position="306"/>
    </location>
</feature>
<feature type="binding site" description="axial binding residue" evidence="2">
    <location>
        <position position="36"/>
    </location>
    <ligand>
        <name>heme</name>
        <dbReference type="ChEBI" id="CHEBI:30413"/>
    </ligand>
    <ligandPart>
        <name>Fe</name>
        <dbReference type="ChEBI" id="CHEBI:18248"/>
    </ligandPart>
</feature>
<feature type="binding site" description="covalent" evidence="2">
    <location>
        <position position="56"/>
    </location>
    <ligand>
        <name>heme</name>
        <dbReference type="ChEBI" id="CHEBI:30413"/>
    </ligand>
</feature>
<feature type="binding site" description="covalent" evidence="2">
    <location>
        <position position="59"/>
    </location>
    <ligand>
        <name>heme</name>
        <dbReference type="ChEBI" id="CHEBI:30413"/>
    </ligand>
</feature>
<feature type="binding site" description="axial binding residue" evidence="2">
    <location>
        <position position="60"/>
    </location>
    <ligand>
        <name>heme</name>
        <dbReference type="ChEBI" id="CHEBI:30413"/>
    </ligand>
    <ligandPart>
        <name>Fe</name>
        <dbReference type="ChEBI" id="CHEBI:18248"/>
    </ligandPart>
</feature>
<dbReference type="EMBL" id="AE009947">
    <property type="protein sequence ID" value="AAT44705.1"/>
    <property type="molecule type" value="Genomic_DNA"/>
</dbReference>
<dbReference type="SMR" id="Q6L387"/>
<dbReference type="GO" id="GO:0009535">
    <property type="term" value="C:chloroplast thylakoid membrane"/>
    <property type="evidence" value="ECO:0007669"/>
    <property type="project" value="UniProtKB-SubCell"/>
</dbReference>
<dbReference type="GO" id="GO:0009055">
    <property type="term" value="F:electron transfer activity"/>
    <property type="evidence" value="ECO:0007669"/>
    <property type="project" value="UniProtKB-UniRule"/>
</dbReference>
<dbReference type="GO" id="GO:0020037">
    <property type="term" value="F:heme binding"/>
    <property type="evidence" value="ECO:0007669"/>
    <property type="project" value="InterPro"/>
</dbReference>
<dbReference type="GO" id="GO:0005506">
    <property type="term" value="F:iron ion binding"/>
    <property type="evidence" value="ECO:0007669"/>
    <property type="project" value="InterPro"/>
</dbReference>
<dbReference type="GO" id="GO:0015979">
    <property type="term" value="P:photosynthesis"/>
    <property type="evidence" value="ECO:0007669"/>
    <property type="project" value="UniProtKB-UniRule"/>
</dbReference>
<dbReference type="FunFam" id="1.20.5.700:FF:000001">
    <property type="entry name" value="Cytochrome f"/>
    <property type="match status" value="1"/>
</dbReference>
<dbReference type="FunFam" id="2.40.50.100:FF:000007">
    <property type="entry name" value="Cytochrome f"/>
    <property type="match status" value="1"/>
</dbReference>
<dbReference type="FunFam" id="2.60.40.830:FF:000001">
    <property type="entry name" value="Cytochrome f"/>
    <property type="match status" value="1"/>
</dbReference>
<dbReference type="Gene3D" id="2.40.50.100">
    <property type="match status" value="1"/>
</dbReference>
<dbReference type="Gene3D" id="2.60.40.830">
    <property type="entry name" value="Cytochrome f large domain"/>
    <property type="match status" value="1"/>
</dbReference>
<dbReference type="Gene3D" id="1.20.5.700">
    <property type="entry name" value="Single helix bin"/>
    <property type="match status" value="1"/>
</dbReference>
<dbReference type="HAMAP" id="MF_00610">
    <property type="entry name" value="Cytb6_f_cytF"/>
    <property type="match status" value="1"/>
</dbReference>
<dbReference type="InterPro" id="IPR024058">
    <property type="entry name" value="Cyt-f_TM"/>
</dbReference>
<dbReference type="InterPro" id="IPR002325">
    <property type="entry name" value="Cyt_f"/>
</dbReference>
<dbReference type="InterPro" id="IPR024094">
    <property type="entry name" value="Cyt_f_lg_dom"/>
</dbReference>
<dbReference type="InterPro" id="IPR036826">
    <property type="entry name" value="Cyt_f_lg_dom_sf"/>
</dbReference>
<dbReference type="InterPro" id="IPR011054">
    <property type="entry name" value="Rudment_hybrid_motif"/>
</dbReference>
<dbReference type="PANTHER" id="PTHR33288">
    <property type="match status" value="1"/>
</dbReference>
<dbReference type="PANTHER" id="PTHR33288:SF10">
    <property type="entry name" value="CYTOCHROME F"/>
    <property type="match status" value="1"/>
</dbReference>
<dbReference type="Pfam" id="PF01333">
    <property type="entry name" value="Apocytochr_F_C"/>
    <property type="match status" value="1"/>
</dbReference>
<dbReference type="Pfam" id="PF16639">
    <property type="entry name" value="Apocytochr_F_N"/>
    <property type="match status" value="1"/>
</dbReference>
<dbReference type="PRINTS" id="PR00610">
    <property type="entry name" value="CYTOCHROMEF"/>
</dbReference>
<dbReference type="SUPFAM" id="SSF103431">
    <property type="entry name" value="Cytochrome f subunit of the cytochrome b6f complex, transmembrane anchor"/>
    <property type="match status" value="1"/>
</dbReference>
<dbReference type="SUPFAM" id="SSF49441">
    <property type="entry name" value="Cytochrome f, large domain"/>
    <property type="match status" value="1"/>
</dbReference>
<dbReference type="SUPFAM" id="SSF51246">
    <property type="entry name" value="Rudiment single hybrid motif"/>
    <property type="match status" value="1"/>
</dbReference>
<dbReference type="PROSITE" id="PS51010">
    <property type="entry name" value="CYTF"/>
    <property type="match status" value="1"/>
</dbReference>
<gene>
    <name evidence="2" type="primary">petA</name>
    <name type="ordered locus">PS136</name>
</gene>
<accession>Q6L387</accession>
<reference key="1">
    <citation type="journal article" date="2004" name="Curr. Genet.">
        <title>Structural features and transcript-editing analysis of sugarcane (Saccharum officinarum L.) chloroplast genome.</title>
        <authorList>
            <person name="Calsa T. Jr."/>
            <person name="Carraro D.M."/>
            <person name="Benatti M.R."/>
            <person name="Barbosa A.C."/>
            <person name="Kitajima J.P."/>
            <person name="Carrer H."/>
        </authorList>
    </citation>
    <scope>NUCLEOTIDE SEQUENCE [LARGE SCALE GENOMIC DNA]</scope>
    <source>
        <strain>cv. SP-80-3280</strain>
    </source>
</reference>
<proteinExistence type="inferred from homology"/>